<accession>P9WPY4</accession>
<accession>L0TDI9</accession>
<accession>P22487</accession>
<gene>
    <name evidence="1" type="primary">aroA</name>
    <name type="ordered locus">MT3324</name>
</gene>
<comment type="function">
    <text evidence="1">Catalyzes the transfer of the enolpyruvyl moiety of phosphoenolpyruvate (PEP) to the 5-hydroxyl of shikimate-3-phosphate (S3P) to produce enolpyruvyl shikimate-3-phosphate and inorganic phosphate.</text>
</comment>
<comment type="catalytic activity">
    <reaction evidence="1">
        <text>3-phosphoshikimate + phosphoenolpyruvate = 5-O-(1-carboxyvinyl)-3-phosphoshikimate + phosphate</text>
        <dbReference type="Rhea" id="RHEA:21256"/>
        <dbReference type="ChEBI" id="CHEBI:43474"/>
        <dbReference type="ChEBI" id="CHEBI:57701"/>
        <dbReference type="ChEBI" id="CHEBI:58702"/>
        <dbReference type="ChEBI" id="CHEBI:145989"/>
        <dbReference type="EC" id="2.5.1.19"/>
    </reaction>
    <physiologicalReaction direction="left-to-right" evidence="1">
        <dbReference type="Rhea" id="RHEA:21257"/>
    </physiologicalReaction>
</comment>
<comment type="pathway">
    <text evidence="1">Metabolic intermediate biosynthesis; chorismate biosynthesis; chorismate from D-erythrose 4-phosphate and phosphoenolpyruvate: step 6/7.</text>
</comment>
<comment type="subunit">
    <text evidence="1">Monomer.</text>
</comment>
<comment type="subcellular location">
    <subcellularLocation>
        <location evidence="1">Cytoplasm</location>
    </subcellularLocation>
</comment>
<comment type="similarity">
    <text evidence="1 3">Belongs to the EPSP synthase family.</text>
</comment>
<name>AROA_MYCTO</name>
<keyword id="KW-0028">Amino-acid biosynthesis</keyword>
<keyword id="KW-0057">Aromatic amino acid biosynthesis</keyword>
<keyword id="KW-0963">Cytoplasm</keyword>
<keyword id="KW-1185">Reference proteome</keyword>
<keyword id="KW-0808">Transferase</keyword>
<dbReference type="EC" id="2.5.1.19" evidence="1"/>
<dbReference type="EMBL" id="AE000516">
    <property type="protein sequence ID" value="AAK47667.1"/>
    <property type="molecule type" value="Genomic_DNA"/>
</dbReference>
<dbReference type="PIR" id="E70590">
    <property type="entry name" value="E70590"/>
</dbReference>
<dbReference type="RefSeq" id="WP_003416914.1">
    <property type="nucleotide sequence ID" value="NZ_KK341227.1"/>
</dbReference>
<dbReference type="SMR" id="P9WPY4"/>
<dbReference type="KEGG" id="mtc:MT3324"/>
<dbReference type="PATRIC" id="fig|83331.31.peg.3580"/>
<dbReference type="HOGENOM" id="CLU_024321_0_0_11"/>
<dbReference type="UniPathway" id="UPA00053">
    <property type="reaction ID" value="UER00089"/>
</dbReference>
<dbReference type="Proteomes" id="UP000001020">
    <property type="component" value="Chromosome"/>
</dbReference>
<dbReference type="GO" id="GO:0005737">
    <property type="term" value="C:cytoplasm"/>
    <property type="evidence" value="ECO:0007669"/>
    <property type="project" value="UniProtKB-SubCell"/>
</dbReference>
<dbReference type="GO" id="GO:0003866">
    <property type="term" value="F:3-phosphoshikimate 1-carboxyvinyltransferase activity"/>
    <property type="evidence" value="ECO:0007669"/>
    <property type="project" value="UniProtKB-UniRule"/>
</dbReference>
<dbReference type="GO" id="GO:0008652">
    <property type="term" value="P:amino acid biosynthetic process"/>
    <property type="evidence" value="ECO:0007669"/>
    <property type="project" value="UniProtKB-KW"/>
</dbReference>
<dbReference type="GO" id="GO:0009073">
    <property type="term" value="P:aromatic amino acid family biosynthetic process"/>
    <property type="evidence" value="ECO:0007669"/>
    <property type="project" value="UniProtKB-KW"/>
</dbReference>
<dbReference type="GO" id="GO:0009423">
    <property type="term" value="P:chorismate biosynthetic process"/>
    <property type="evidence" value="ECO:0007669"/>
    <property type="project" value="UniProtKB-UniRule"/>
</dbReference>
<dbReference type="CDD" id="cd01556">
    <property type="entry name" value="EPSP_synthase"/>
    <property type="match status" value="1"/>
</dbReference>
<dbReference type="FunFam" id="3.65.10.10:FF:000010">
    <property type="entry name" value="3-phosphoshikimate 1-carboxyvinyltransferase"/>
    <property type="match status" value="1"/>
</dbReference>
<dbReference type="FunFam" id="3.65.10.10:FF:000011">
    <property type="entry name" value="3-phosphoshikimate 1-carboxyvinyltransferase"/>
    <property type="match status" value="1"/>
</dbReference>
<dbReference type="Gene3D" id="3.65.10.10">
    <property type="entry name" value="Enolpyruvate transferase domain"/>
    <property type="match status" value="2"/>
</dbReference>
<dbReference type="HAMAP" id="MF_00210">
    <property type="entry name" value="EPSP_synth"/>
    <property type="match status" value="1"/>
</dbReference>
<dbReference type="InterPro" id="IPR001986">
    <property type="entry name" value="Enolpyruvate_Tfrase_dom"/>
</dbReference>
<dbReference type="InterPro" id="IPR036968">
    <property type="entry name" value="Enolpyruvate_Tfrase_sf"/>
</dbReference>
<dbReference type="InterPro" id="IPR006264">
    <property type="entry name" value="EPSP_synthase"/>
</dbReference>
<dbReference type="InterPro" id="IPR023193">
    <property type="entry name" value="EPSP_synthase_CS"/>
</dbReference>
<dbReference type="InterPro" id="IPR013792">
    <property type="entry name" value="RNA3'P_cycl/enolpyr_Trfase_a/b"/>
</dbReference>
<dbReference type="NCBIfam" id="TIGR01356">
    <property type="entry name" value="aroA"/>
    <property type="match status" value="1"/>
</dbReference>
<dbReference type="PANTHER" id="PTHR21090">
    <property type="entry name" value="AROM/DEHYDROQUINATE SYNTHASE"/>
    <property type="match status" value="1"/>
</dbReference>
<dbReference type="PANTHER" id="PTHR21090:SF5">
    <property type="entry name" value="PENTAFUNCTIONAL AROM POLYPEPTIDE"/>
    <property type="match status" value="1"/>
</dbReference>
<dbReference type="Pfam" id="PF00275">
    <property type="entry name" value="EPSP_synthase"/>
    <property type="match status" value="1"/>
</dbReference>
<dbReference type="PIRSF" id="PIRSF000505">
    <property type="entry name" value="EPSPS"/>
    <property type="match status" value="1"/>
</dbReference>
<dbReference type="SUPFAM" id="SSF55205">
    <property type="entry name" value="EPT/RTPC-like"/>
    <property type="match status" value="1"/>
</dbReference>
<dbReference type="PROSITE" id="PS00104">
    <property type="entry name" value="EPSP_SYNTHASE_1"/>
    <property type="match status" value="1"/>
</dbReference>
<dbReference type="PROSITE" id="PS00885">
    <property type="entry name" value="EPSP_SYNTHASE_2"/>
    <property type="match status" value="1"/>
</dbReference>
<organism>
    <name type="scientific">Mycobacterium tuberculosis (strain CDC 1551 / Oshkosh)</name>
    <dbReference type="NCBI Taxonomy" id="83331"/>
    <lineage>
        <taxon>Bacteria</taxon>
        <taxon>Bacillati</taxon>
        <taxon>Actinomycetota</taxon>
        <taxon>Actinomycetes</taxon>
        <taxon>Mycobacteriales</taxon>
        <taxon>Mycobacteriaceae</taxon>
        <taxon>Mycobacterium</taxon>
        <taxon>Mycobacterium tuberculosis complex</taxon>
    </lineage>
</organism>
<evidence type="ECO:0000255" key="1">
    <source>
        <dbReference type="HAMAP-Rule" id="MF_00210"/>
    </source>
</evidence>
<evidence type="ECO:0000256" key="2">
    <source>
        <dbReference type="SAM" id="MobiDB-lite"/>
    </source>
</evidence>
<evidence type="ECO:0000305" key="3"/>
<reference key="1">
    <citation type="journal article" date="2002" name="J. Bacteriol.">
        <title>Whole-genome comparison of Mycobacterium tuberculosis clinical and laboratory strains.</title>
        <authorList>
            <person name="Fleischmann R.D."/>
            <person name="Alland D."/>
            <person name="Eisen J.A."/>
            <person name="Carpenter L."/>
            <person name="White O."/>
            <person name="Peterson J.D."/>
            <person name="DeBoy R.T."/>
            <person name="Dodson R.J."/>
            <person name="Gwinn M.L."/>
            <person name="Haft D.H."/>
            <person name="Hickey E.K."/>
            <person name="Kolonay J.F."/>
            <person name="Nelson W.C."/>
            <person name="Umayam L.A."/>
            <person name="Ermolaeva M.D."/>
            <person name="Salzberg S.L."/>
            <person name="Delcher A."/>
            <person name="Utterback T.R."/>
            <person name="Weidman J.F."/>
            <person name="Khouri H.M."/>
            <person name="Gill J."/>
            <person name="Mikula A."/>
            <person name="Bishai W."/>
            <person name="Jacobs W.R. Jr."/>
            <person name="Venter J.C."/>
            <person name="Fraser C.M."/>
        </authorList>
    </citation>
    <scope>NUCLEOTIDE SEQUENCE [LARGE SCALE GENOMIC DNA]</scope>
    <source>
        <strain>CDC 1551 / Oshkosh</strain>
    </source>
</reference>
<feature type="chain" id="PRO_0000426871" description="3-phosphoshikimate 1-carboxyvinyltransferase">
    <location>
        <begin position="1"/>
        <end position="450"/>
    </location>
</feature>
<feature type="region of interest" description="Disordered" evidence="2">
    <location>
        <begin position="426"/>
        <end position="450"/>
    </location>
</feature>
<feature type="active site" description="Proton acceptor" evidence="1">
    <location>
        <position position="311"/>
    </location>
</feature>
<feature type="binding site" evidence="1">
    <location>
        <position position="23"/>
    </location>
    <ligand>
        <name>3-phosphoshikimate</name>
        <dbReference type="ChEBI" id="CHEBI:145989"/>
    </ligand>
</feature>
<feature type="binding site" evidence="1">
    <location>
        <position position="23"/>
    </location>
    <ligand>
        <name>phosphoenolpyruvate</name>
        <dbReference type="ChEBI" id="CHEBI:58702"/>
    </ligand>
</feature>
<feature type="binding site" evidence="1">
    <location>
        <position position="24"/>
    </location>
    <ligand>
        <name>3-phosphoshikimate</name>
        <dbReference type="ChEBI" id="CHEBI:145989"/>
    </ligand>
</feature>
<feature type="binding site" evidence="1">
    <location>
        <position position="28"/>
    </location>
    <ligand>
        <name>3-phosphoshikimate</name>
        <dbReference type="ChEBI" id="CHEBI:145989"/>
    </ligand>
</feature>
<feature type="binding site" evidence="1">
    <location>
        <position position="96"/>
    </location>
    <ligand>
        <name>phosphoenolpyruvate</name>
        <dbReference type="ChEBI" id="CHEBI:58702"/>
    </ligand>
</feature>
<feature type="binding site" evidence="1">
    <location>
        <position position="124"/>
    </location>
    <ligand>
        <name>phosphoenolpyruvate</name>
        <dbReference type="ChEBI" id="CHEBI:58702"/>
    </ligand>
</feature>
<feature type="binding site" evidence="1">
    <location>
        <position position="167"/>
    </location>
    <ligand>
        <name>3-phosphoshikimate</name>
        <dbReference type="ChEBI" id="CHEBI:145989"/>
    </ligand>
</feature>
<feature type="binding site" evidence="1">
    <location>
        <position position="168"/>
    </location>
    <ligand>
        <name>3-phosphoshikimate</name>
        <dbReference type="ChEBI" id="CHEBI:145989"/>
    </ligand>
</feature>
<feature type="binding site" evidence="1">
    <location>
        <position position="169"/>
    </location>
    <ligand>
        <name>3-phosphoshikimate</name>
        <dbReference type="ChEBI" id="CHEBI:145989"/>
    </ligand>
</feature>
<feature type="binding site" evidence="1">
    <location>
        <position position="169"/>
    </location>
    <ligand>
        <name>phosphoenolpyruvate</name>
        <dbReference type="ChEBI" id="CHEBI:58702"/>
    </ligand>
</feature>
<feature type="binding site" evidence="1">
    <location>
        <position position="196"/>
    </location>
    <ligand>
        <name>3-phosphoshikimate</name>
        <dbReference type="ChEBI" id="CHEBI:145989"/>
    </ligand>
</feature>
<feature type="binding site" evidence="1">
    <location>
        <position position="311"/>
    </location>
    <ligand>
        <name>3-phosphoshikimate</name>
        <dbReference type="ChEBI" id="CHEBI:145989"/>
    </ligand>
</feature>
<feature type="binding site" evidence="1">
    <location>
        <position position="340"/>
    </location>
    <ligand>
        <name>3-phosphoshikimate</name>
        <dbReference type="ChEBI" id="CHEBI:145989"/>
    </ligand>
</feature>
<feature type="binding site" evidence="1">
    <location>
        <position position="344"/>
    </location>
    <ligand>
        <name>phosphoenolpyruvate</name>
        <dbReference type="ChEBI" id="CHEBI:58702"/>
    </ligand>
</feature>
<feature type="binding site" evidence="1">
    <location>
        <position position="385"/>
    </location>
    <ligand>
        <name>phosphoenolpyruvate</name>
        <dbReference type="ChEBI" id="CHEBI:58702"/>
    </ligand>
</feature>
<feature type="binding site" evidence="1">
    <location>
        <position position="410"/>
    </location>
    <ligand>
        <name>phosphoenolpyruvate</name>
        <dbReference type="ChEBI" id="CHEBI:58702"/>
    </ligand>
</feature>
<sequence length="450" mass="46426">MKTWPAPTAPTPVRATVTVPGSKSQTNRALVLAALAAAQGRGASTISGALRSRDTELMLDALQTLGLRVDGVGSELTVSGRIEPGPGARVDCGLAGTVLRFVPPLAALGSVPVTFDGDQQARGRPIAPLLDALRELGVAVDGTGLPFRVRGNGSLAGGTVAIDASASSQFVSGLLLSAASFTDGLTVQHTGSSLPSAPHIAMTAAMLRQAGVDIDDSTPNRWQVRPGPVAARRWDIEPDLTNAVAFLSAAVVSGGTVRITGWPRVSVQPADHILAILRQLNAVVIHADSSLEVRGPTGYDGFDVDLRAVGELTPSVAALAALASPGSVSRLSGIAHLRGHETDRLAALSTEINRLGGTCRETPDGLVITATPLRPGIWRAYADHRMAMAGAIIGLRVAGVEVDDIAATTKTLPEFPRLWAEMVGPGQGWGYPQPRSGQRARRATGQGSGG</sequence>
<proteinExistence type="inferred from homology"/>
<protein>
    <recommendedName>
        <fullName evidence="1">3-phosphoshikimate 1-carboxyvinyltransferase</fullName>
        <ecNumber evidence="1">2.5.1.19</ecNumber>
    </recommendedName>
    <alternativeName>
        <fullName evidence="1">5-enolpyruvylshikimate-3-phosphate synthase</fullName>
        <shortName evidence="1">EPSP synthase</shortName>
        <shortName evidence="1">EPSPS</shortName>
    </alternativeName>
</protein>